<name>PACC_PARBR</name>
<accession>Q8J257</accession>
<sequence>MSSRENPDTSAPMAQQQPQQQQQQQQPQPQQQQQQQQQQQQAQQTTQQQQSPQQPSQQSPLPAAAAAASVIAPVPLPQNGSNGAALGVTENLVCQWQGCQERLPTAEALYEHVCERHVGRKSTNNLNLTCGWANCRTTTVKRDHITSHIRVHVPLKPHKCDFCGKAFKRPQDLKKHVKTHADDSVLVRSPEPGPGTRPPNGMFGVGVGADGKCSLGHVHGQGYPHGAPQYYQTPHQQHPSNPSYGNVYYAIGSDSHQASYESKKRGYDALNEFFGDLKRRQFDPTSYAVVGQRLLNLHGLPLPLVNGAAVAVPEYQTQPMPAMVSVGHGGGHSGGGGYQPASPMQSYHLPPMGNLRTKADLMNIDQFLEQMQSTVYESDDHVAAAGVAQPGAHYVQHGGMSYRTSHSSNNANANANASHTATSSPPSAATNIPSTHATATTTTTSAPMIPTSSAARLLPTHAPRHALTPPSSAQSYTSGRSPVSVSSTHHHIPPSHHYTHTHNHNHNHPNSSAGMYPTLPATSAQDGSSTNTYHGVSGAAAPSTLSSVFDSEGGRRYAGGCCRGLDRGLWRRHHRRRQGSPSMSFAEVGGNDTKTASPSMSFSASVIDPALQAGSEKQSGSSGSGGEAGAGAGAGAGAGEERNGSSSSPTADVEEVSRALSSANATTTMATKTAPPEVPSHTVEQWVANVRLLEKLRLYIYERLSR</sequence>
<feature type="chain" id="PRO_0000046839" description="pH-response transcription factor pacC/RIM101">
    <location>
        <begin position="1"/>
        <end position="706"/>
    </location>
</feature>
<feature type="zinc finger region" description="C2H2-type 1" evidence="2">
    <location>
        <begin position="92"/>
        <end position="117"/>
    </location>
</feature>
<feature type="zinc finger region" description="C2H2-type 2" evidence="2">
    <location>
        <begin position="128"/>
        <end position="152"/>
    </location>
</feature>
<feature type="zinc finger region" description="C2H2-type 3" evidence="2">
    <location>
        <begin position="158"/>
        <end position="180"/>
    </location>
</feature>
<feature type="region of interest" description="Disordered" evidence="3">
    <location>
        <begin position="1"/>
        <end position="65"/>
    </location>
</feature>
<feature type="region of interest" description="Disordered" evidence="3">
    <location>
        <begin position="397"/>
        <end position="434"/>
    </location>
</feature>
<feature type="region of interest" description="Disordered" evidence="3">
    <location>
        <begin position="463"/>
        <end position="543"/>
    </location>
</feature>
<feature type="region of interest" description="Disordered" evidence="3">
    <location>
        <begin position="573"/>
        <end position="679"/>
    </location>
</feature>
<feature type="compositionally biased region" description="Polar residues" evidence="3">
    <location>
        <begin position="1"/>
        <end position="13"/>
    </location>
</feature>
<feature type="compositionally biased region" description="Low complexity" evidence="3">
    <location>
        <begin position="14"/>
        <end position="65"/>
    </location>
</feature>
<feature type="compositionally biased region" description="Low complexity" evidence="3">
    <location>
        <begin position="404"/>
        <end position="434"/>
    </location>
</feature>
<feature type="compositionally biased region" description="Polar residues" evidence="3">
    <location>
        <begin position="469"/>
        <end position="480"/>
    </location>
</feature>
<feature type="compositionally biased region" description="Basic residues" evidence="3">
    <location>
        <begin position="488"/>
        <end position="507"/>
    </location>
</feature>
<feature type="compositionally biased region" description="Polar residues" evidence="3">
    <location>
        <begin position="520"/>
        <end position="534"/>
    </location>
</feature>
<feature type="compositionally biased region" description="Polar residues" evidence="3">
    <location>
        <begin position="592"/>
        <end position="604"/>
    </location>
</feature>
<feature type="compositionally biased region" description="Gly residues" evidence="3">
    <location>
        <begin position="622"/>
        <end position="638"/>
    </location>
</feature>
<feature type="compositionally biased region" description="Low complexity" evidence="3">
    <location>
        <begin position="659"/>
        <end position="674"/>
    </location>
</feature>
<dbReference type="EMBL" id="AF536981">
    <property type="protein sequence ID" value="AAN06812.2"/>
    <property type="molecule type" value="Genomic_DNA"/>
</dbReference>
<dbReference type="VEuPathDB" id="FungiDB:PABG_11557"/>
<dbReference type="VEuPathDB" id="FungiDB:PADG_00964"/>
<dbReference type="GO" id="GO:0005634">
    <property type="term" value="C:nucleus"/>
    <property type="evidence" value="ECO:0007669"/>
    <property type="project" value="UniProtKB-SubCell"/>
</dbReference>
<dbReference type="GO" id="GO:0003677">
    <property type="term" value="F:DNA binding"/>
    <property type="evidence" value="ECO:0007669"/>
    <property type="project" value="UniProtKB-KW"/>
</dbReference>
<dbReference type="GO" id="GO:0008270">
    <property type="term" value="F:zinc ion binding"/>
    <property type="evidence" value="ECO:0007669"/>
    <property type="project" value="UniProtKB-KW"/>
</dbReference>
<dbReference type="GO" id="GO:0045944">
    <property type="term" value="P:positive regulation of transcription by RNA polymerase II"/>
    <property type="evidence" value="ECO:0007669"/>
    <property type="project" value="TreeGrafter"/>
</dbReference>
<dbReference type="FunFam" id="3.30.160.60:FF:000458">
    <property type="entry name" value="pH-response transcription factor pacC/RIM101"/>
    <property type="match status" value="1"/>
</dbReference>
<dbReference type="FunFam" id="3.30.160.60:FF:001875">
    <property type="entry name" value="pH-response transcription factor pacC/RIM101"/>
    <property type="match status" value="1"/>
</dbReference>
<dbReference type="Gene3D" id="3.30.160.60">
    <property type="entry name" value="Classic Zinc Finger"/>
    <property type="match status" value="2"/>
</dbReference>
<dbReference type="InterPro" id="IPR050806">
    <property type="entry name" value="pacC/RIM101"/>
</dbReference>
<dbReference type="InterPro" id="IPR036236">
    <property type="entry name" value="Znf_C2H2_sf"/>
</dbReference>
<dbReference type="InterPro" id="IPR013087">
    <property type="entry name" value="Znf_C2H2_type"/>
</dbReference>
<dbReference type="PANTHER" id="PTHR47257">
    <property type="entry name" value="PH-RESPONSE TRANSCRIPTION FACTOR PACC/RIM101"/>
    <property type="match status" value="1"/>
</dbReference>
<dbReference type="PANTHER" id="PTHR47257:SF1">
    <property type="entry name" value="PH-RESPONSE TRANSCRIPTION FACTOR PACC_RIM101"/>
    <property type="match status" value="1"/>
</dbReference>
<dbReference type="SMART" id="SM00355">
    <property type="entry name" value="ZnF_C2H2"/>
    <property type="match status" value="3"/>
</dbReference>
<dbReference type="SUPFAM" id="SSF57667">
    <property type="entry name" value="beta-beta-alpha zinc fingers"/>
    <property type="match status" value="2"/>
</dbReference>
<dbReference type="PROSITE" id="PS00028">
    <property type="entry name" value="ZINC_FINGER_C2H2_1"/>
    <property type="match status" value="2"/>
</dbReference>
<dbReference type="PROSITE" id="PS50157">
    <property type="entry name" value="ZINC_FINGER_C2H2_2"/>
    <property type="match status" value="2"/>
</dbReference>
<organism>
    <name type="scientific">Paracoccidioides brasiliensis</name>
    <dbReference type="NCBI Taxonomy" id="121759"/>
    <lineage>
        <taxon>Eukaryota</taxon>
        <taxon>Fungi</taxon>
        <taxon>Dikarya</taxon>
        <taxon>Ascomycota</taxon>
        <taxon>Pezizomycotina</taxon>
        <taxon>Eurotiomycetes</taxon>
        <taxon>Eurotiomycetidae</taxon>
        <taxon>Onygenales</taxon>
        <taxon>Ajellomycetaceae</taxon>
        <taxon>Paracoccidioides</taxon>
    </lineage>
</organism>
<comment type="function">
    <text evidence="1">Transcription factor that mediates regulation of both acid- and alkaline-expressed genes in response to ambient pH. At alkaline ambient pH, activates transcription of alkaline-expressed genes (including pacC itself) and represses transcription of acid-expressed genes (By similarity).</text>
</comment>
<comment type="subcellular location">
    <subcellularLocation>
        <location evidence="4">Nucleus</location>
    </subcellularLocation>
</comment>
<comment type="similarity">
    <text evidence="4">Belongs to the pacC/RIM101 family.</text>
</comment>
<reference key="1">
    <citation type="submission" date="2007-06" db="EMBL/GenBank/DDBJ databases">
        <title>Structural and expression analysis of the transcriptional factor encoding gene pacc of Paracoccidioides brasiliensis.</title>
        <authorList>
            <person name="Aguiar S.M."/>
            <person name="Mello-de-Sousa T.M."/>
            <person name="Neves E.O."/>
            <person name="Pocas-Fonseca M.J."/>
        </authorList>
    </citation>
    <scope>NUCLEOTIDE SEQUENCE [GENOMIC DNA]</scope>
</reference>
<keyword id="KW-0010">Activator</keyword>
<keyword id="KW-0238">DNA-binding</keyword>
<keyword id="KW-0479">Metal-binding</keyword>
<keyword id="KW-0539">Nucleus</keyword>
<keyword id="KW-0677">Repeat</keyword>
<keyword id="KW-0678">Repressor</keyword>
<keyword id="KW-0804">Transcription</keyword>
<keyword id="KW-0805">Transcription regulation</keyword>
<keyword id="KW-0862">Zinc</keyword>
<keyword id="KW-0863">Zinc-finger</keyword>
<gene>
    <name type="primary">pacC</name>
</gene>
<proteinExistence type="inferred from homology"/>
<protein>
    <recommendedName>
        <fullName>pH-response transcription factor pacC/RIM101</fullName>
    </recommendedName>
</protein>
<evidence type="ECO:0000250" key="1"/>
<evidence type="ECO:0000255" key="2">
    <source>
        <dbReference type="PROSITE-ProRule" id="PRU00042"/>
    </source>
</evidence>
<evidence type="ECO:0000256" key="3">
    <source>
        <dbReference type="SAM" id="MobiDB-lite"/>
    </source>
</evidence>
<evidence type="ECO:0000305" key="4"/>